<reference key="1">
    <citation type="journal article" date="1995" name="Yeast">
        <title>Sequence analysis of a 5.6 kb fragment of chromosome II from Saccharomyces cerevisiae reveals two new open reading frames next to CDC28.</title>
        <authorList>
            <person name="Baur S."/>
            <person name="Becker J."/>
            <person name="Li Z."/>
            <person name="Niegemann E."/>
            <person name="Wehner E."/>
            <person name="Wolter R."/>
            <person name="Brendel M."/>
        </authorList>
    </citation>
    <scope>NUCLEOTIDE SEQUENCE [GENOMIC DNA]</scope>
</reference>
<reference key="2">
    <citation type="journal article" date="1994" name="EMBO J.">
        <title>Complete DNA sequence of yeast chromosome II.</title>
        <authorList>
            <person name="Feldmann H."/>
            <person name="Aigle M."/>
            <person name="Aljinovic G."/>
            <person name="Andre B."/>
            <person name="Baclet M.C."/>
            <person name="Barthe C."/>
            <person name="Baur A."/>
            <person name="Becam A.-M."/>
            <person name="Biteau N."/>
            <person name="Boles E."/>
            <person name="Brandt T."/>
            <person name="Brendel M."/>
            <person name="Brueckner M."/>
            <person name="Bussereau F."/>
            <person name="Christiansen C."/>
            <person name="Contreras R."/>
            <person name="Crouzet M."/>
            <person name="Cziepluch C."/>
            <person name="Demolis N."/>
            <person name="Delaveau T."/>
            <person name="Doignon F."/>
            <person name="Domdey H."/>
            <person name="Duesterhus S."/>
            <person name="Dubois E."/>
            <person name="Dujon B."/>
            <person name="El Bakkoury M."/>
            <person name="Entian K.-D."/>
            <person name="Feuermann M."/>
            <person name="Fiers W."/>
            <person name="Fobo G.M."/>
            <person name="Fritz C."/>
            <person name="Gassenhuber J."/>
            <person name="Glansdorff N."/>
            <person name="Goffeau A."/>
            <person name="Grivell L.A."/>
            <person name="de Haan M."/>
            <person name="Hein C."/>
            <person name="Herbert C.J."/>
            <person name="Hollenberg C.P."/>
            <person name="Holmstroem K."/>
            <person name="Jacq C."/>
            <person name="Jacquet M."/>
            <person name="Jauniaux J.-C."/>
            <person name="Jonniaux J.-L."/>
            <person name="Kallesoee T."/>
            <person name="Kiesau P."/>
            <person name="Kirchrath L."/>
            <person name="Koetter P."/>
            <person name="Korol S."/>
            <person name="Liebl S."/>
            <person name="Logghe M."/>
            <person name="Lohan A.J.E."/>
            <person name="Louis E.J."/>
            <person name="Li Z.Y."/>
            <person name="Maat M.J."/>
            <person name="Mallet L."/>
            <person name="Mannhaupt G."/>
            <person name="Messenguy F."/>
            <person name="Miosga T."/>
            <person name="Molemans F."/>
            <person name="Mueller S."/>
            <person name="Nasr F."/>
            <person name="Obermaier B."/>
            <person name="Perea J."/>
            <person name="Pierard A."/>
            <person name="Piravandi E."/>
            <person name="Pohl F.M."/>
            <person name="Pohl T.M."/>
            <person name="Potier S."/>
            <person name="Proft M."/>
            <person name="Purnelle B."/>
            <person name="Ramezani Rad M."/>
            <person name="Rieger M."/>
            <person name="Rose M."/>
            <person name="Schaaff-Gerstenschlaeger I."/>
            <person name="Scherens B."/>
            <person name="Schwarzlose C."/>
            <person name="Skala J."/>
            <person name="Slonimski P.P."/>
            <person name="Smits P.H.M."/>
            <person name="Souciet J.-L."/>
            <person name="Steensma H.Y."/>
            <person name="Stucka R."/>
            <person name="Urrestarazu L.A."/>
            <person name="van der Aart Q.J.M."/>
            <person name="Van Dyck L."/>
            <person name="Vassarotti A."/>
            <person name="Vetter I."/>
            <person name="Vierendeels F."/>
            <person name="Vissers S."/>
            <person name="Wagner G."/>
            <person name="de Wergifosse P."/>
            <person name="Wolfe K.H."/>
            <person name="Zagulski M."/>
            <person name="Zimmermann F.K."/>
            <person name="Mewes H.-W."/>
            <person name="Kleine K."/>
        </authorList>
    </citation>
    <scope>NUCLEOTIDE SEQUENCE [LARGE SCALE GENOMIC DNA]</scope>
    <source>
        <strain>ATCC 204508 / S288c</strain>
    </source>
</reference>
<reference key="3">
    <citation type="journal article" date="2014" name="G3 (Bethesda)">
        <title>The reference genome sequence of Saccharomyces cerevisiae: Then and now.</title>
        <authorList>
            <person name="Engel S.R."/>
            <person name="Dietrich F.S."/>
            <person name="Fisk D.G."/>
            <person name="Binkley G."/>
            <person name="Balakrishnan R."/>
            <person name="Costanzo M.C."/>
            <person name="Dwight S.S."/>
            <person name="Hitz B.C."/>
            <person name="Karra K."/>
            <person name="Nash R.S."/>
            <person name="Weng S."/>
            <person name="Wong E.D."/>
            <person name="Lloyd P."/>
            <person name="Skrzypek M.S."/>
            <person name="Miyasato S.R."/>
            <person name="Simison M."/>
            <person name="Cherry J.M."/>
        </authorList>
    </citation>
    <scope>GENOME REANNOTATION</scope>
    <source>
        <strain>ATCC 204508 / S288c</strain>
    </source>
</reference>
<reference key="4">
    <citation type="journal article" date="2001" name="Nature">
        <title>Genomic binding sites of the yeast cell-cycle transcription factors SBF and MBF.</title>
        <authorList>
            <person name="Iyer V.R."/>
            <person name="Horak C.E."/>
            <person name="Scafe C.S."/>
            <person name="Botstein D."/>
            <person name="Snyder M."/>
            <person name="Brown P.O."/>
        </authorList>
    </citation>
    <scope>INDUCTION</scope>
</reference>
<reference key="5">
    <citation type="journal article" date="2002" name="Curr. Genet.">
        <title>Sequence-based approach for identification of cell wall proteins in Saccharomyces cerevisiae.</title>
        <authorList>
            <person name="Terashima H."/>
            <person name="Fukuchi S."/>
            <person name="Nakai K."/>
            <person name="Arisawa M."/>
            <person name="Hamada K."/>
            <person name="Yabuki N."/>
            <person name="Kitada K."/>
        </authorList>
    </citation>
    <scope>SUBCELLULAR LOCATION</scope>
</reference>
<reference key="6">
    <citation type="journal article" date="2003" name="Nature">
        <title>Global analysis of protein expression in yeast.</title>
        <authorList>
            <person name="Ghaemmaghami S."/>
            <person name="Huh W.-K."/>
            <person name="Bower K."/>
            <person name="Howson R.W."/>
            <person name="Belle A."/>
            <person name="Dephoure N."/>
            <person name="O'Shea E.K."/>
            <person name="Weissman J.S."/>
        </authorList>
    </citation>
    <scope>LEVEL OF PROTEIN EXPRESSION [LARGE SCALE ANALYSIS]</scope>
</reference>
<reference key="7">
    <citation type="journal article" date="2005" name="J. Biol. Chem.">
        <title>Comprehensive proteomic analysis of Saccharomyces cerevisiae cell walls: identification of proteins covalently attached via glycosylphosphatidylinositol remnants or mild alkali-sensitive linkages.</title>
        <authorList>
            <person name="Yin Q.Y."/>
            <person name="de Groot P.W.J."/>
            <person name="Dekker H.L."/>
            <person name="de Jong L."/>
            <person name="Klis F.M."/>
            <person name="de Koster C.G."/>
        </authorList>
    </citation>
    <scope>IDENTIFICATION BY MASS SPECTROMETRY</scope>
    <scope>SUBCELLULAR LOCATION</scope>
    <scope>DISRUPTION PHENOTYPE</scope>
</reference>
<reference key="8">
    <citation type="journal article" date="2010" name="Cell Cycle">
        <title>TOS1 is circularly permuted 1,3-beta-glucanase.</title>
        <authorList>
            <person name="Steczkiewicz K."/>
            <person name="Knizewski L."/>
            <person name="Rychlewski L."/>
            <person name="Ginalski K."/>
        </authorList>
    </citation>
    <scope>FUNCTION PREDICTION</scope>
    <scope>DOMAIN</scope>
</reference>
<evidence type="ECO:0000255" key="1"/>
<evidence type="ECO:0000256" key="2">
    <source>
        <dbReference type="SAM" id="MobiDB-lite"/>
    </source>
</evidence>
<evidence type="ECO:0000269" key="3">
    <source>
    </source>
</evidence>
<evidence type="ECO:0000269" key="4">
    <source>
    </source>
</evidence>
<evidence type="ECO:0000269" key="5">
    <source>
    </source>
</evidence>
<evidence type="ECO:0000269" key="6">
    <source>
    </source>
</evidence>
<evidence type="ECO:0000303" key="7">
    <source>
    </source>
</evidence>
<evidence type="ECO:0000303" key="8">
    <source>
    </source>
</evidence>
<evidence type="ECO:0000305" key="9"/>
<evidence type="ECO:0000305" key="10">
    <source>
    </source>
</evidence>
<keyword id="KW-0134">Cell wall</keyword>
<keyword id="KW-0961">Cell wall biogenesis/degradation</keyword>
<keyword id="KW-0325">Glycoprotein</keyword>
<keyword id="KW-0326">Glycosidase</keyword>
<keyword id="KW-0378">Hydrolase</keyword>
<keyword id="KW-1185">Reference proteome</keyword>
<keyword id="KW-0964">Secreted</keyword>
<keyword id="KW-0732">Signal</keyword>
<organism>
    <name type="scientific">Saccharomyces cerevisiae (strain ATCC 204508 / S288c)</name>
    <name type="common">Baker's yeast</name>
    <dbReference type="NCBI Taxonomy" id="559292"/>
    <lineage>
        <taxon>Eukaryota</taxon>
        <taxon>Fungi</taxon>
        <taxon>Dikarya</taxon>
        <taxon>Ascomycota</taxon>
        <taxon>Saccharomycotina</taxon>
        <taxon>Saccharomycetes</taxon>
        <taxon>Saccharomycetales</taxon>
        <taxon>Saccharomycetaceae</taxon>
        <taxon>Saccharomyces</taxon>
    </lineage>
</organism>
<proteinExistence type="evidence at protein level"/>
<gene>
    <name evidence="7" type="primary">TOS1</name>
    <name type="ordered locus">YBR162C</name>
    <name type="ORF">YBR1213</name>
</gene>
<comment type="function">
    <text evidence="10">Probable circularly permuted 1,3-beta-glucanase involved in cell wall modification through beta-1,3-glucan network alterations such as increased branching or remodeling.</text>
</comment>
<comment type="catalytic activity">
    <reaction evidence="10">
        <text>Hydrolysis of (1-&gt;3)-beta-D-glucosidic linkages in (1-&gt;3)-beta-D-glucans.</text>
        <dbReference type="EC" id="3.2.1.39"/>
    </reaction>
</comment>
<comment type="subcellular location">
    <subcellularLocation>
        <location evidence="4 6">Secreted</location>
    </subcellularLocation>
    <subcellularLocation>
        <location evidence="4 6">Secreted</location>
        <location evidence="4 6">Cell wall</location>
    </subcellularLocation>
</comment>
<comment type="induction">
    <text evidence="3">Expression is regulated by the cell cycle SBF transcription complex.</text>
</comment>
<comment type="domain">
    <text evidence="10">The conserved ExDxxE motif might be important for catalytic activity.</text>
</comment>
<comment type="disruption phenotype">
    <text evidence="6">Leads to a slight sensitivity to the cell wall damaging agent calcofluor white (PubMed:15781460). Also shows a slightly decreased ability to grow at 39 degrees Celsius (PubMed:15781460). Results in an increased resistance to Quantazyme, a recombinant beta-1,3-glucanase that hydrolyzes beta-1,3-glucan (PubMed:15781460).</text>
</comment>
<comment type="miscellaneous">
    <text evidence="5">Present with 12300 molecules/cell in log phase SD medium.</text>
</comment>
<comment type="similarity">
    <text evidence="9">Belongs to the PGA52 family.</text>
</comment>
<dbReference type="EC" id="3.2.1.39" evidence="10"/>
<dbReference type="EMBL" id="X80224">
    <property type="protein sequence ID" value="CAA56511.1"/>
    <property type="molecule type" value="Genomic_DNA"/>
</dbReference>
<dbReference type="EMBL" id="Z36031">
    <property type="protein sequence ID" value="CAA85122.1"/>
    <property type="molecule type" value="Genomic_DNA"/>
</dbReference>
<dbReference type="EMBL" id="BK006936">
    <property type="protein sequence ID" value="DAA07277.1"/>
    <property type="molecule type" value="Genomic_DNA"/>
</dbReference>
<dbReference type="PIR" id="S46033">
    <property type="entry name" value="S46033"/>
</dbReference>
<dbReference type="RefSeq" id="NP_009720.1">
    <property type="nucleotide sequence ID" value="NM_001178510.1"/>
</dbReference>
<dbReference type="BioGRID" id="32861">
    <property type="interactions" value="88"/>
</dbReference>
<dbReference type="DIP" id="DIP-4932N"/>
<dbReference type="FunCoup" id="P38288">
    <property type="interactions" value="86"/>
</dbReference>
<dbReference type="IntAct" id="P38288">
    <property type="interactions" value="22"/>
</dbReference>
<dbReference type="STRING" id="4932.YBR162C"/>
<dbReference type="GlyCosmos" id="P38288">
    <property type="glycosylation" value="2 sites, No reported glycans"/>
</dbReference>
<dbReference type="GlyGen" id="P38288">
    <property type="glycosylation" value="2 sites"/>
</dbReference>
<dbReference type="iPTMnet" id="P38288"/>
<dbReference type="PaxDb" id="4932-YBR162C"/>
<dbReference type="PeptideAtlas" id="P38288"/>
<dbReference type="EnsemblFungi" id="YBR162C_mRNA">
    <property type="protein sequence ID" value="YBR162C"/>
    <property type="gene ID" value="YBR162C"/>
</dbReference>
<dbReference type="GeneID" id="852459"/>
<dbReference type="KEGG" id="sce:YBR162C"/>
<dbReference type="AGR" id="SGD:S000000366"/>
<dbReference type="SGD" id="S000000366">
    <property type="gene designation" value="TOS1"/>
</dbReference>
<dbReference type="VEuPathDB" id="FungiDB:YBR162C"/>
<dbReference type="eggNOG" id="ENOG502QSI7">
    <property type="taxonomic scope" value="Eukaryota"/>
</dbReference>
<dbReference type="GeneTree" id="ENSGT00940000176743"/>
<dbReference type="HOGENOM" id="CLU_030276_0_0_1"/>
<dbReference type="InParanoid" id="P38288"/>
<dbReference type="OMA" id="NQDMPAI"/>
<dbReference type="OrthoDB" id="118256at2759"/>
<dbReference type="BioCyc" id="YEAST:G3O-29112-MONOMER"/>
<dbReference type="BioGRID-ORCS" id="852459">
    <property type="hits" value="6 hits in 10 CRISPR screens"/>
</dbReference>
<dbReference type="PRO" id="PR:P38288"/>
<dbReference type="Proteomes" id="UP000002311">
    <property type="component" value="Chromosome II"/>
</dbReference>
<dbReference type="RNAct" id="P38288">
    <property type="molecule type" value="protein"/>
</dbReference>
<dbReference type="GO" id="GO:0071944">
    <property type="term" value="C:cell periphery"/>
    <property type="evidence" value="ECO:0007005"/>
    <property type="project" value="SGD"/>
</dbReference>
<dbReference type="GO" id="GO:0005576">
    <property type="term" value="C:extracellular region"/>
    <property type="evidence" value="ECO:0007669"/>
    <property type="project" value="UniProtKB-SubCell"/>
</dbReference>
<dbReference type="GO" id="GO:0009277">
    <property type="term" value="C:fungal-type cell wall"/>
    <property type="evidence" value="ECO:0000314"/>
    <property type="project" value="SGD"/>
</dbReference>
<dbReference type="GO" id="GO:0000324">
    <property type="term" value="C:fungal-type vacuole"/>
    <property type="evidence" value="ECO:0007005"/>
    <property type="project" value="SGD"/>
</dbReference>
<dbReference type="GO" id="GO:0016798">
    <property type="term" value="F:hydrolase activity, acting on glycosyl bonds"/>
    <property type="evidence" value="ECO:0007669"/>
    <property type="project" value="UniProtKB-KW"/>
</dbReference>
<dbReference type="GO" id="GO:0071555">
    <property type="term" value="P:cell wall organization"/>
    <property type="evidence" value="ECO:0007669"/>
    <property type="project" value="UniProtKB-KW"/>
</dbReference>
<dbReference type="InterPro" id="IPR018805">
    <property type="entry name" value="YJL171C/Tos1_C"/>
</dbReference>
<dbReference type="InterPro" id="IPR018807">
    <property type="entry name" value="YJL171C/Tos1_N"/>
</dbReference>
<dbReference type="PANTHER" id="PTHR31737">
    <property type="entry name" value="PROTEIN TOS1"/>
    <property type="match status" value="1"/>
</dbReference>
<dbReference type="PANTHER" id="PTHR31737:SF2">
    <property type="entry name" value="PROTEIN TOS1"/>
    <property type="match status" value="1"/>
</dbReference>
<dbReference type="Pfam" id="PF10287">
    <property type="entry name" value="YJL171C_Tos1_C"/>
    <property type="match status" value="1"/>
</dbReference>
<dbReference type="Pfam" id="PF10290">
    <property type="entry name" value="YJL171C_Tos1_N"/>
    <property type="match status" value="1"/>
</dbReference>
<protein>
    <recommendedName>
        <fullName evidence="8">Probable circularly permuted 1,3-beta-glucanase TOS1</fullName>
        <ecNumber evidence="10">3.2.1.39</ecNumber>
    </recommendedName>
    <alternativeName>
        <fullName evidence="7">Target of SBF protein 1</fullName>
    </alternativeName>
</protein>
<accession>P38288</accession>
<accession>D6VQF7</accession>
<feature type="signal peptide" evidence="1">
    <location>
        <begin position="1"/>
        <end position="23"/>
    </location>
</feature>
<feature type="chain" id="PRO_0000022563" description="Probable circularly permuted 1,3-beta-glucanase TOS1">
    <location>
        <begin position="24"/>
        <end position="455"/>
    </location>
</feature>
<feature type="region of interest" description="Disordered" evidence="2">
    <location>
        <begin position="158"/>
        <end position="221"/>
    </location>
</feature>
<feature type="short sequence motif" description="ExDxxE motif" evidence="10">
    <location>
        <begin position="372"/>
        <end position="377"/>
    </location>
</feature>
<feature type="compositionally biased region" description="Polar residues" evidence="2">
    <location>
        <begin position="172"/>
        <end position="189"/>
    </location>
</feature>
<feature type="compositionally biased region" description="Low complexity" evidence="2">
    <location>
        <begin position="190"/>
        <end position="219"/>
    </location>
</feature>
<feature type="glycosylation site" description="N-linked (GlcNAc...) asparagine" evidence="1">
    <location>
        <position position="236"/>
    </location>
</feature>
<feature type="glycosylation site" description="N-linked (GlcNAc...) asparagine" evidence="1">
    <location>
        <position position="417"/>
    </location>
</feature>
<sequence length="455" mass="47994">MLQKLSMTALVGLFSSVVSLVNADCTYSGGNYYCAQTDAIIYSNVGLSATYQDVTNMDESSCACTQADFTASGSLAPFNEELSVHFRGPIELLQFGVYYPNGESNALKKRSEKQSIESCKEGEAVVSRHKHQHKRDVAVEYVQVTSTVYVDSNGQTVTADSTNTVVGPAVPSSYTKDSTVLSSSAQAVETSESQSSISSSKTTSSAAAASSSSSSSSNTNGDWSRGSYFVPGSTSNCTFMNNQGGTAGSGVWSSCFGNSISFAASDGVSGAASAQALGDVTIKSGNEFMIFSGEECSGNNGDCGYYREGIPAYHGFGGADKIFVFEFSMPSDTSGSAYNQDMPAIWLLNAKIPRTLQYGDASCSCWKTGCGEMDLFEILTAGSDKLISHIHDGQDGGTQDYFERPTDGTLKAAVIFNSSDKTIHIIEVDESFDATLSDDVVDQWLSKSGSSAALP</sequence>
<name>TOS1_YEAST</name>